<proteinExistence type="predicted"/>
<sequence>MEVDPAEQIEKAGTLITIEGLKKDDYDKAIVNFLALREDLQLLAASPKGDVYRNTSGNGAEIFLNGMKIATDEDFLFSYHIKEPNKKLQRSLNRENKNLPRDCYRENIITILKSNINNRTQTLIDELIDSRDQYDNGEWSFIDVKKLIGLNTNRNILWADSSSKNIEKLIYSLYGMDTKKYEILALNSLQYRSMENDDRLKKQTLMHVSEKLKQQRIEEEAEKIKVKEQKPRKRFEEEDLPIEDLNPIEREGWDWAMEKARELCGFIRGWEKLYEEYQFVLMEKNHKYVGLCYTDQKIIKLSRGILKDEYSLLNTLVHEICHATTNGRDGTKKFERGLTDAFHPLFKLGQSK</sequence>
<reference key="1">
    <citation type="journal article" date="1996" name="Nucleic Acids Res.">
        <title>Complete sequence analysis of the genome of the bacterium Mycoplasma pneumoniae.</title>
        <authorList>
            <person name="Himmelreich R."/>
            <person name="Hilbert H."/>
            <person name="Plagens H."/>
            <person name="Pirkl E."/>
            <person name="Li B.-C."/>
            <person name="Herrmann R."/>
        </authorList>
    </citation>
    <scope>NUCLEOTIDE SEQUENCE [LARGE SCALE GENOMIC DNA]</scope>
    <source>
        <strain>ATCC 29342 / M129 / Subtype 1</strain>
    </source>
</reference>
<dbReference type="EMBL" id="U00089">
    <property type="protein sequence ID" value="AAB95855.1"/>
    <property type="molecule type" value="Genomic_DNA"/>
</dbReference>
<dbReference type="PIR" id="S73533">
    <property type="entry name" value="S73533"/>
</dbReference>
<dbReference type="RefSeq" id="NP_110324.1">
    <property type="nucleotide sequence ID" value="NC_000912.1"/>
</dbReference>
<dbReference type="IntAct" id="P75162">
    <property type="interactions" value="1"/>
</dbReference>
<dbReference type="STRING" id="272634.MPN_635"/>
<dbReference type="EnsemblBacteria" id="AAB95855">
    <property type="protein sequence ID" value="AAB95855"/>
    <property type="gene ID" value="MPN_635"/>
</dbReference>
<dbReference type="KEGG" id="mpn:MPN_635"/>
<dbReference type="PATRIC" id="fig|272634.6.peg.698"/>
<dbReference type="HOGENOM" id="CLU_787137_0_0_14"/>
<dbReference type="OrthoDB" id="5241077at2"/>
<dbReference type="BioCyc" id="MPNE272634:G1GJ3-1018-MONOMER"/>
<dbReference type="Proteomes" id="UP000000808">
    <property type="component" value="Chromosome"/>
</dbReference>
<comment type="similarity">
    <text evidence="1">To M.pneumoniae MPN_633 (in the N-terminal section), and M.pneumoniae MPN_634 (in the C-terminal section).</text>
</comment>
<gene>
    <name type="ordered locus">MPN_635</name>
    <name type="ORF">E30_orf352</name>
    <name type="ORF">MP207</name>
</gene>
<protein>
    <recommendedName>
        <fullName>Uncharacterized protein MPN_635</fullName>
    </recommendedName>
</protein>
<keyword id="KW-1185">Reference proteome</keyword>
<feature type="chain" id="PRO_0000210702" description="Uncharacterized protein MPN_635">
    <location>
        <begin position="1"/>
        <end position="352"/>
    </location>
</feature>
<organism>
    <name type="scientific">Mycoplasma pneumoniae (strain ATCC 29342 / M129 / Subtype 1)</name>
    <name type="common">Mycoplasmoides pneumoniae</name>
    <dbReference type="NCBI Taxonomy" id="272634"/>
    <lineage>
        <taxon>Bacteria</taxon>
        <taxon>Bacillati</taxon>
        <taxon>Mycoplasmatota</taxon>
        <taxon>Mycoplasmoidales</taxon>
        <taxon>Mycoplasmoidaceae</taxon>
        <taxon>Mycoplasmoides</taxon>
    </lineage>
</organism>
<accession>P75162</accession>
<evidence type="ECO:0000305" key="1"/>
<name>Y635_MYCPN</name>